<evidence type="ECO:0000255" key="1">
    <source>
        <dbReference type="PROSITE-ProRule" id="PRU00303"/>
    </source>
</evidence>
<evidence type="ECO:0000305" key="2"/>
<reference key="1">
    <citation type="submission" date="1994-12" db="EMBL/GenBank/DDBJ databases">
        <title>Rickettsia amblyommii, sp. nov., isolated from the Lone Star tick, Amblyomma americanum (Ixodidae).</title>
        <authorList>
            <person name="Stothard D.R."/>
            <person name="Ralph D.A."/>
            <person name="Clark J.B."/>
            <person name="Fuerst P.A."/>
            <person name="Pretzman C."/>
        </authorList>
    </citation>
    <scope>NUCLEOTIDE SEQUENCE [GENOMIC DNA]</scope>
    <source>
        <strain>Ohio 83-441</strain>
    </source>
</reference>
<organism>
    <name type="scientific">Rickettsia montanensis</name>
    <dbReference type="NCBI Taxonomy" id="33991"/>
    <lineage>
        <taxon>Bacteria</taxon>
        <taxon>Pseudomonadati</taxon>
        <taxon>Pseudomonadota</taxon>
        <taxon>Alphaproteobacteria</taxon>
        <taxon>Rickettsiales</taxon>
        <taxon>Rickettsiaceae</taxon>
        <taxon>Rickettsieae</taxon>
        <taxon>Rickettsia</taxon>
        <taxon>spotted fever group</taxon>
    </lineage>
</organism>
<protein>
    <recommendedName>
        <fullName>17 kDa surface antigen</fullName>
    </recommendedName>
</protein>
<feature type="signal peptide" evidence="1">
    <location>
        <begin position="1"/>
        <end position="19"/>
    </location>
</feature>
<feature type="chain" id="PRO_0000018017" description="17 kDa surface antigen">
    <location>
        <begin position="20"/>
        <end position="154" status="greater than"/>
    </location>
</feature>
<feature type="lipid moiety-binding region" description="N-palmitoyl cysteine" evidence="2">
    <location>
        <position position="20"/>
    </location>
</feature>
<feature type="lipid moiety-binding region" description="S-diacylglycerol cysteine" evidence="2">
    <location>
        <position position="20"/>
    </location>
</feature>
<feature type="non-terminal residue">
    <location>
        <position position="154"/>
    </location>
</feature>
<name>17KD_RICMO</name>
<keyword id="KW-0998">Cell outer membrane</keyword>
<keyword id="KW-0449">Lipoprotein</keyword>
<keyword id="KW-0472">Membrane</keyword>
<keyword id="KW-0564">Palmitate</keyword>
<keyword id="KW-0732">Signal</keyword>
<accession>P50929</accession>
<gene>
    <name type="primary">omp</name>
</gene>
<sequence>MKLLSKIMIIALAASMLQACNGPGGMNKQGTGTLLGGAGGALLGSQFGQGKGQLVGVGVGALLGAVLGGQIGAGMDEQDRRLAELTSQRALETAPSGSNVEWRNPDNGNYGYVTPNKTYRNSTGQYCREYTQTVVIGGKQQKAYGNACLQPDGQ</sequence>
<dbReference type="EMBL" id="U11017">
    <property type="protein sequence ID" value="AAB07705.1"/>
    <property type="molecule type" value="Genomic_DNA"/>
</dbReference>
<dbReference type="GO" id="GO:0009279">
    <property type="term" value="C:cell outer membrane"/>
    <property type="evidence" value="ECO:0007669"/>
    <property type="project" value="UniProtKB-SubCell"/>
</dbReference>
<dbReference type="InterPro" id="IPR032635">
    <property type="entry name" value="Anti_2"/>
</dbReference>
<dbReference type="InterPro" id="IPR008816">
    <property type="entry name" value="Gly_zipper_2TM_dom"/>
</dbReference>
<dbReference type="InterPro" id="IPR016364">
    <property type="entry name" value="Surface_antigen_Rickettsia"/>
</dbReference>
<dbReference type="Pfam" id="PF16998">
    <property type="entry name" value="17kDa_Anti_2"/>
    <property type="match status" value="1"/>
</dbReference>
<dbReference type="Pfam" id="PF05433">
    <property type="entry name" value="Rick_17kDa_Anti"/>
    <property type="match status" value="1"/>
</dbReference>
<dbReference type="PIRSF" id="PIRSF002721">
    <property type="entry name" value="Surface_antigen_Rickettsia"/>
    <property type="match status" value="1"/>
</dbReference>
<dbReference type="PROSITE" id="PS51257">
    <property type="entry name" value="PROKAR_LIPOPROTEIN"/>
    <property type="match status" value="1"/>
</dbReference>
<comment type="subcellular location">
    <subcellularLocation>
        <location evidence="2">Cell outer membrane</location>
        <topology evidence="2">Lipid-anchor</topology>
    </subcellularLocation>
</comment>
<comment type="similarity">
    <text evidence="2">Belongs to the rickettsiale 17 kDa surface antigen family.</text>
</comment>
<proteinExistence type="inferred from homology"/>